<comment type="function">
    <text evidence="1">Involved in the biosynthesis of the osmoprotectant glycine betaine. Catalyzes the irreversible oxidation of betaine aldehyde to the corresponding acid.</text>
</comment>
<comment type="catalytic activity">
    <reaction evidence="1">
        <text>betaine aldehyde + NAD(+) + H2O = glycine betaine + NADH + 2 H(+)</text>
        <dbReference type="Rhea" id="RHEA:15305"/>
        <dbReference type="ChEBI" id="CHEBI:15377"/>
        <dbReference type="ChEBI" id="CHEBI:15378"/>
        <dbReference type="ChEBI" id="CHEBI:15710"/>
        <dbReference type="ChEBI" id="CHEBI:17750"/>
        <dbReference type="ChEBI" id="CHEBI:57540"/>
        <dbReference type="ChEBI" id="CHEBI:57945"/>
        <dbReference type="EC" id="1.2.1.8"/>
    </reaction>
    <physiologicalReaction direction="left-to-right" evidence="1">
        <dbReference type="Rhea" id="RHEA:15306"/>
    </physiologicalReaction>
</comment>
<comment type="cofactor">
    <cofactor evidence="1">
        <name>K(+)</name>
        <dbReference type="ChEBI" id="CHEBI:29103"/>
    </cofactor>
    <text evidence="1">Binds 2 potassium ions per subunit.</text>
</comment>
<comment type="pathway">
    <text evidence="1">Amine and polyamine biosynthesis; betaine biosynthesis via choline pathway; betaine from betaine aldehyde: step 1/1.</text>
</comment>
<comment type="subunit">
    <text evidence="1">Dimer of dimers.</text>
</comment>
<comment type="similarity">
    <text evidence="1">Belongs to the aldehyde dehydrogenase family.</text>
</comment>
<keyword id="KW-0479">Metal-binding</keyword>
<keyword id="KW-0520">NAD</keyword>
<keyword id="KW-0521">NADP</keyword>
<keyword id="KW-0558">Oxidation</keyword>
<keyword id="KW-0560">Oxidoreductase</keyword>
<keyword id="KW-0630">Potassium</keyword>
<sequence>MARFELQKLYIDGAYSDAGSDATFEAINPANGEVLAHVQRATKEDVERAVVSAEKGQKIWAAMTAMERSRILRRAVDILRERNDELAALETLDTGKAFSETKYVDIVTGADVLEYYAGLVPAIEGEQIPLRDTSFVYTRREPLGVVAGIGAWNYPIQIALWKSAPALAAGNAMIFKPSEVTSLTTLKLAEIYTEAGVPNGVFNVLTGSGREVGTWLTEHPRIEKISFTGGTDTGKKVMASASASSLKDVTMELGGKSPLIICDDADLDRAADTAMMANFYSSGQVCTNGTRVFVPSHLKAAFEAKIVERVARIRVGNPEDENTNFGPLVSFPHMESVLGYIAKGKEEGARVLCGGERLTDGEFAKGAFVAPTVFTDCTDDMTIVREEIFGPVMAILSYETEEEVIRRANDTDFGLAAGIVTRDLNRAHRVIHQLEAGICWINAWGESDAKMPVGGYKQSGVGRENGISSLNNFTRIKSVQVELGDYVSVF</sequence>
<accession>Q3K5H4</accession>
<organism>
    <name type="scientific">Pseudomonas fluorescens (strain Pf0-1)</name>
    <dbReference type="NCBI Taxonomy" id="205922"/>
    <lineage>
        <taxon>Bacteria</taxon>
        <taxon>Pseudomonadati</taxon>
        <taxon>Pseudomonadota</taxon>
        <taxon>Gammaproteobacteria</taxon>
        <taxon>Pseudomonadales</taxon>
        <taxon>Pseudomonadaceae</taxon>
        <taxon>Pseudomonas</taxon>
    </lineage>
</organism>
<reference key="1">
    <citation type="journal article" date="2009" name="Genome Biol.">
        <title>Genomic and genetic analyses of diversity and plant interactions of Pseudomonas fluorescens.</title>
        <authorList>
            <person name="Silby M.W."/>
            <person name="Cerdeno-Tarraga A.M."/>
            <person name="Vernikos G.S."/>
            <person name="Giddens S.R."/>
            <person name="Jackson R.W."/>
            <person name="Preston G.M."/>
            <person name="Zhang X.-X."/>
            <person name="Moon C.D."/>
            <person name="Gehrig S.M."/>
            <person name="Godfrey S.A.C."/>
            <person name="Knight C.G."/>
            <person name="Malone J.G."/>
            <person name="Robinson Z."/>
            <person name="Spiers A.J."/>
            <person name="Harris S."/>
            <person name="Challis G.L."/>
            <person name="Yaxley A.M."/>
            <person name="Harris D."/>
            <person name="Seeger K."/>
            <person name="Murphy L."/>
            <person name="Rutter S."/>
            <person name="Squares R."/>
            <person name="Quail M.A."/>
            <person name="Saunders E."/>
            <person name="Mavromatis K."/>
            <person name="Brettin T.S."/>
            <person name="Bentley S.D."/>
            <person name="Hothersall J."/>
            <person name="Stephens E."/>
            <person name="Thomas C.M."/>
            <person name="Parkhill J."/>
            <person name="Levy S.B."/>
            <person name="Rainey P.B."/>
            <person name="Thomson N.R."/>
        </authorList>
    </citation>
    <scope>NUCLEOTIDE SEQUENCE [LARGE SCALE GENOMIC DNA]</scope>
    <source>
        <strain>Pf0-1</strain>
    </source>
</reference>
<name>BETB_PSEPF</name>
<proteinExistence type="inferred from homology"/>
<gene>
    <name evidence="1" type="primary">betB</name>
    <name type="ordered locus">Pfl01_5243</name>
</gene>
<evidence type="ECO:0000255" key="1">
    <source>
        <dbReference type="HAMAP-Rule" id="MF_00804"/>
    </source>
</evidence>
<dbReference type="EC" id="1.2.1.8" evidence="1"/>
<dbReference type="EMBL" id="CP000094">
    <property type="protein sequence ID" value="ABA76980.1"/>
    <property type="molecule type" value="Genomic_DNA"/>
</dbReference>
<dbReference type="RefSeq" id="WP_011336306.1">
    <property type="nucleotide sequence ID" value="NC_007492.2"/>
</dbReference>
<dbReference type="SMR" id="Q3K5H4"/>
<dbReference type="KEGG" id="pfo:Pfl01_5243"/>
<dbReference type="eggNOG" id="COG1012">
    <property type="taxonomic scope" value="Bacteria"/>
</dbReference>
<dbReference type="HOGENOM" id="CLU_005391_0_0_6"/>
<dbReference type="UniPathway" id="UPA00529">
    <property type="reaction ID" value="UER00386"/>
</dbReference>
<dbReference type="Proteomes" id="UP000002704">
    <property type="component" value="Chromosome"/>
</dbReference>
<dbReference type="GO" id="GO:0008802">
    <property type="term" value="F:betaine-aldehyde dehydrogenase (NAD+) activity"/>
    <property type="evidence" value="ECO:0007669"/>
    <property type="project" value="UniProtKB-UniRule"/>
</dbReference>
<dbReference type="GO" id="GO:0046872">
    <property type="term" value="F:metal ion binding"/>
    <property type="evidence" value="ECO:0007669"/>
    <property type="project" value="UniProtKB-KW"/>
</dbReference>
<dbReference type="GO" id="GO:0019285">
    <property type="term" value="P:glycine betaine biosynthetic process from choline"/>
    <property type="evidence" value="ECO:0007669"/>
    <property type="project" value="UniProtKB-UniRule"/>
</dbReference>
<dbReference type="CDD" id="cd07090">
    <property type="entry name" value="ALDH_F9_TMBADH"/>
    <property type="match status" value="1"/>
</dbReference>
<dbReference type="FunFam" id="3.40.309.10:FF:000014">
    <property type="entry name" value="NAD/NADP-dependent betaine aldehyde dehydrogenase"/>
    <property type="match status" value="1"/>
</dbReference>
<dbReference type="FunFam" id="3.40.605.10:FF:000007">
    <property type="entry name" value="NAD/NADP-dependent betaine aldehyde dehydrogenase"/>
    <property type="match status" value="1"/>
</dbReference>
<dbReference type="Gene3D" id="3.40.605.10">
    <property type="entry name" value="Aldehyde Dehydrogenase, Chain A, domain 1"/>
    <property type="match status" value="1"/>
</dbReference>
<dbReference type="Gene3D" id="3.40.309.10">
    <property type="entry name" value="Aldehyde Dehydrogenase, Chain A, domain 2"/>
    <property type="match status" value="1"/>
</dbReference>
<dbReference type="HAMAP" id="MF_00804">
    <property type="entry name" value="BADH"/>
    <property type="match status" value="1"/>
</dbReference>
<dbReference type="InterPro" id="IPR016161">
    <property type="entry name" value="Ald_DH/histidinol_DH"/>
</dbReference>
<dbReference type="InterPro" id="IPR016163">
    <property type="entry name" value="Ald_DH_C"/>
</dbReference>
<dbReference type="InterPro" id="IPR016160">
    <property type="entry name" value="Ald_DH_CS_CYS"/>
</dbReference>
<dbReference type="InterPro" id="IPR029510">
    <property type="entry name" value="Ald_DH_CS_GLU"/>
</dbReference>
<dbReference type="InterPro" id="IPR016162">
    <property type="entry name" value="Ald_DH_N"/>
</dbReference>
<dbReference type="InterPro" id="IPR015590">
    <property type="entry name" value="Aldehyde_DH_dom"/>
</dbReference>
<dbReference type="InterPro" id="IPR011264">
    <property type="entry name" value="BADH"/>
</dbReference>
<dbReference type="NCBIfam" id="TIGR01804">
    <property type="entry name" value="BADH"/>
    <property type="match status" value="1"/>
</dbReference>
<dbReference type="NCBIfam" id="NF009725">
    <property type="entry name" value="PRK13252.1"/>
    <property type="match status" value="1"/>
</dbReference>
<dbReference type="PANTHER" id="PTHR11699">
    <property type="entry name" value="ALDEHYDE DEHYDROGENASE-RELATED"/>
    <property type="match status" value="1"/>
</dbReference>
<dbReference type="Pfam" id="PF00171">
    <property type="entry name" value="Aldedh"/>
    <property type="match status" value="1"/>
</dbReference>
<dbReference type="SUPFAM" id="SSF53720">
    <property type="entry name" value="ALDH-like"/>
    <property type="match status" value="1"/>
</dbReference>
<dbReference type="PROSITE" id="PS00070">
    <property type="entry name" value="ALDEHYDE_DEHYDR_CYS"/>
    <property type="match status" value="1"/>
</dbReference>
<dbReference type="PROSITE" id="PS00687">
    <property type="entry name" value="ALDEHYDE_DEHYDR_GLU"/>
    <property type="match status" value="1"/>
</dbReference>
<feature type="chain" id="PRO_1000047050" description="Betaine aldehyde dehydrogenase">
    <location>
        <begin position="1"/>
        <end position="490"/>
    </location>
</feature>
<feature type="active site" description="Charge relay system" evidence="1">
    <location>
        <position position="162"/>
    </location>
</feature>
<feature type="active site" description="Proton acceptor" evidence="1">
    <location>
        <position position="252"/>
    </location>
</feature>
<feature type="active site" description="Nucleophile" evidence="1">
    <location>
        <position position="286"/>
    </location>
</feature>
<feature type="active site" description="Charge relay system" evidence="1">
    <location>
        <position position="464"/>
    </location>
</feature>
<feature type="binding site" evidence="1">
    <location>
        <position position="27"/>
    </location>
    <ligand>
        <name>K(+)</name>
        <dbReference type="ChEBI" id="CHEBI:29103"/>
        <label>1</label>
    </ligand>
</feature>
<feature type="binding site" evidence="1">
    <location>
        <position position="93"/>
    </location>
    <ligand>
        <name>K(+)</name>
        <dbReference type="ChEBI" id="CHEBI:29103"/>
        <label>1</label>
    </ligand>
</feature>
<feature type="binding site" evidence="1">
    <location>
        <begin position="150"/>
        <end position="152"/>
    </location>
    <ligand>
        <name>NAD(+)</name>
        <dbReference type="ChEBI" id="CHEBI:57540"/>
    </ligand>
</feature>
<feature type="binding site" evidence="1">
    <location>
        <begin position="176"/>
        <end position="179"/>
    </location>
    <ligand>
        <name>NAD(+)</name>
        <dbReference type="ChEBI" id="CHEBI:57540"/>
    </ligand>
</feature>
<feature type="binding site" evidence="1">
    <location>
        <position position="180"/>
    </location>
    <ligand>
        <name>K(+)</name>
        <dbReference type="ChEBI" id="CHEBI:29103"/>
        <label>1</label>
    </ligand>
</feature>
<feature type="binding site" evidence="1">
    <location>
        <begin position="230"/>
        <end position="233"/>
    </location>
    <ligand>
        <name>NAD(+)</name>
        <dbReference type="ChEBI" id="CHEBI:57540"/>
    </ligand>
</feature>
<feature type="binding site" evidence="1">
    <location>
        <position position="246"/>
    </location>
    <ligand>
        <name>K(+)</name>
        <dbReference type="ChEBI" id="CHEBI:29103"/>
        <label>2</label>
    </ligand>
</feature>
<feature type="binding site" evidence="1">
    <location>
        <position position="254"/>
    </location>
    <ligand>
        <name>NAD(+)</name>
        <dbReference type="ChEBI" id="CHEBI:57540"/>
    </ligand>
</feature>
<feature type="binding site" description="covalent" evidence="1">
    <location>
        <position position="286"/>
    </location>
    <ligand>
        <name>NAD(+)</name>
        <dbReference type="ChEBI" id="CHEBI:57540"/>
    </ligand>
</feature>
<feature type="binding site" evidence="1">
    <location>
        <position position="387"/>
    </location>
    <ligand>
        <name>NAD(+)</name>
        <dbReference type="ChEBI" id="CHEBI:57540"/>
    </ligand>
</feature>
<feature type="binding site" evidence="1">
    <location>
        <position position="457"/>
    </location>
    <ligand>
        <name>K(+)</name>
        <dbReference type="ChEBI" id="CHEBI:29103"/>
        <label>2</label>
    </ligand>
</feature>
<feature type="binding site" evidence="1">
    <location>
        <position position="460"/>
    </location>
    <ligand>
        <name>K(+)</name>
        <dbReference type="ChEBI" id="CHEBI:29103"/>
        <label>2</label>
    </ligand>
</feature>
<feature type="site" description="Seems to be a necessary countercharge to the potassium cations" evidence="1">
    <location>
        <position position="248"/>
    </location>
</feature>
<feature type="modified residue" description="Cysteine sulfenic acid (-SOH)" evidence="1">
    <location>
        <position position="286"/>
    </location>
</feature>
<protein>
    <recommendedName>
        <fullName evidence="1">Betaine aldehyde dehydrogenase</fullName>
        <shortName evidence="1">BADH</shortName>
        <ecNumber evidence="1">1.2.1.8</ecNumber>
    </recommendedName>
</protein>